<dbReference type="EMBL" id="AK315501">
    <property type="protein sequence ID" value="BAG37885.1"/>
    <property type="molecule type" value="mRNA"/>
</dbReference>
<dbReference type="EMBL" id="AL834285">
    <property type="protein sequence ID" value="CAD38959.2"/>
    <property type="molecule type" value="mRNA"/>
</dbReference>
<dbReference type="EMBL" id="AL139316">
    <property type="status" value="NOT_ANNOTATED_CDS"/>
    <property type="molecule type" value="Genomic_DNA"/>
</dbReference>
<dbReference type="EMBL" id="CH471061">
    <property type="protein sequence ID" value="EAW80657.1"/>
    <property type="molecule type" value="Genomic_DNA"/>
</dbReference>
<dbReference type="EMBL" id="BC015621">
    <property type="protein sequence ID" value="AAH15621.1"/>
    <property type="molecule type" value="mRNA"/>
</dbReference>
<dbReference type="CCDS" id="CCDS32085.1"/>
<dbReference type="RefSeq" id="NP_653179.1">
    <property type="nucleotide sequence ID" value="NM_144578.4"/>
</dbReference>
<dbReference type="SMR" id="Q8NDC0"/>
<dbReference type="BioGRID" id="125030">
    <property type="interactions" value="48"/>
</dbReference>
<dbReference type="FunCoup" id="Q8NDC0">
    <property type="interactions" value="1538"/>
</dbReference>
<dbReference type="IntAct" id="Q8NDC0">
    <property type="interactions" value="37"/>
</dbReference>
<dbReference type="STRING" id="9606.ENSP00000378851"/>
<dbReference type="GlyCosmos" id="Q8NDC0">
    <property type="glycosylation" value="9 sites, 2 glycans"/>
</dbReference>
<dbReference type="GlyGen" id="Q8NDC0">
    <property type="glycosylation" value="16 sites, 2 O-linked glycans (10 sites)"/>
</dbReference>
<dbReference type="iPTMnet" id="Q8NDC0"/>
<dbReference type="PhosphoSitePlus" id="Q8NDC0"/>
<dbReference type="BioMuta" id="MAPK1IP1L"/>
<dbReference type="jPOST" id="Q8NDC0"/>
<dbReference type="MassIVE" id="Q8NDC0"/>
<dbReference type="PaxDb" id="9606-ENSP00000378851"/>
<dbReference type="PeptideAtlas" id="Q8NDC0"/>
<dbReference type="ProteomicsDB" id="73012"/>
<dbReference type="Pumba" id="Q8NDC0"/>
<dbReference type="Antibodypedia" id="49801">
    <property type="antibodies" value="85 antibodies from 17 providers"/>
</dbReference>
<dbReference type="DNASU" id="93487"/>
<dbReference type="Ensembl" id="ENST00000395468.9">
    <property type="protein sequence ID" value="ENSP00000378851.3"/>
    <property type="gene ID" value="ENSG00000168175.16"/>
</dbReference>
<dbReference type="GeneID" id="93487"/>
<dbReference type="KEGG" id="hsa:93487"/>
<dbReference type="MANE-Select" id="ENST00000395468.9">
    <property type="protein sequence ID" value="ENSP00000378851.3"/>
    <property type="RefSeq nucleotide sequence ID" value="NM_144578.4"/>
    <property type="RefSeq protein sequence ID" value="NP_653179.1"/>
</dbReference>
<dbReference type="UCSC" id="uc001xbq.2">
    <property type="organism name" value="human"/>
</dbReference>
<dbReference type="AGR" id="HGNC:19840"/>
<dbReference type="CTD" id="93487"/>
<dbReference type="DisGeNET" id="93487"/>
<dbReference type="GeneCards" id="MAPK1IP1L"/>
<dbReference type="HGNC" id="HGNC:19840">
    <property type="gene designation" value="MAPK1IP1L"/>
</dbReference>
<dbReference type="HPA" id="ENSG00000168175">
    <property type="expression patterns" value="Low tissue specificity"/>
</dbReference>
<dbReference type="neXtProt" id="NX_Q8NDC0"/>
<dbReference type="OpenTargets" id="ENSG00000168175"/>
<dbReference type="PharmGKB" id="PA162395015"/>
<dbReference type="VEuPathDB" id="HostDB:ENSG00000168175"/>
<dbReference type="eggNOG" id="ENOG502RYAB">
    <property type="taxonomic scope" value="Eukaryota"/>
</dbReference>
<dbReference type="GeneTree" id="ENSGT00730000111340"/>
<dbReference type="HOGENOM" id="CLU_063887_0_0_1"/>
<dbReference type="InParanoid" id="Q8NDC0"/>
<dbReference type="OMA" id="TPSMPYP"/>
<dbReference type="OrthoDB" id="9398504at2759"/>
<dbReference type="PAN-GO" id="Q8NDC0">
    <property type="GO annotations" value="0 GO annotations based on evolutionary models"/>
</dbReference>
<dbReference type="PhylomeDB" id="Q8NDC0"/>
<dbReference type="PathwayCommons" id="Q8NDC0"/>
<dbReference type="SignaLink" id="Q8NDC0"/>
<dbReference type="BioGRID-ORCS" id="93487">
    <property type="hits" value="20 hits in 1157 CRISPR screens"/>
</dbReference>
<dbReference type="ChiTaRS" id="MAPK1IP1L">
    <property type="organism name" value="human"/>
</dbReference>
<dbReference type="GeneWiki" id="C14orf32"/>
<dbReference type="GenomeRNAi" id="93487"/>
<dbReference type="Pharos" id="Q8NDC0">
    <property type="development level" value="Tbio"/>
</dbReference>
<dbReference type="PRO" id="PR:Q8NDC0"/>
<dbReference type="Proteomes" id="UP000005640">
    <property type="component" value="Chromosome 14"/>
</dbReference>
<dbReference type="RNAct" id="Q8NDC0">
    <property type="molecule type" value="protein"/>
</dbReference>
<dbReference type="Bgee" id="ENSG00000168175">
    <property type="expression patterns" value="Expressed in cauda epididymis and 216 other cell types or tissues"/>
</dbReference>
<dbReference type="InterPro" id="IPR031653">
    <property type="entry name" value="MISS"/>
</dbReference>
<dbReference type="PANTHER" id="PTHR35973">
    <property type="entry name" value="MAPK-INTERACTING AND SPINDLE-STABILIZING PROTEIN-LIKE"/>
    <property type="match status" value="1"/>
</dbReference>
<dbReference type="PANTHER" id="PTHR35973:SF1">
    <property type="entry name" value="MAPK-INTERACTING AND SPINDLE-STABILIZING PROTEIN-LIKE"/>
    <property type="match status" value="1"/>
</dbReference>
<dbReference type="Pfam" id="PF15822">
    <property type="entry name" value="MISS"/>
    <property type="match status" value="1"/>
</dbReference>
<reference key="1">
    <citation type="journal article" date="2004" name="Nat. Genet.">
        <title>Complete sequencing and characterization of 21,243 full-length human cDNAs.</title>
        <authorList>
            <person name="Ota T."/>
            <person name="Suzuki Y."/>
            <person name="Nishikawa T."/>
            <person name="Otsuki T."/>
            <person name="Sugiyama T."/>
            <person name="Irie R."/>
            <person name="Wakamatsu A."/>
            <person name="Hayashi K."/>
            <person name="Sato H."/>
            <person name="Nagai K."/>
            <person name="Kimura K."/>
            <person name="Makita H."/>
            <person name="Sekine M."/>
            <person name="Obayashi M."/>
            <person name="Nishi T."/>
            <person name="Shibahara T."/>
            <person name="Tanaka T."/>
            <person name="Ishii S."/>
            <person name="Yamamoto J."/>
            <person name="Saito K."/>
            <person name="Kawai Y."/>
            <person name="Isono Y."/>
            <person name="Nakamura Y."/>
            <person name="Nagahari K."/>
            <person name="Murakami K."/>
            <person name="Yasuda T."/>
            <person name="Iwayanagi T."/>
            <person name="Wagatsuma M."/>
            <person name="Shiratori A."/>
            <person name="Sudo H."/>
            <person name="Hosoiri T."/>
            <person name="Kaku Y."/>
            <person name="Kodaira H."/>
            <person name="Kondo H."/>
            <person name="Sugawara M."/>
            <person name="Takahashi M."/>
            <person name="Kanda K."/>
            <person name="Yokoi T."/>
            <person name="Furuya T."/>
            <person name="Kikkawa E."/>
            <person name="Omura Y."/>
            <person name="Abe K."/>
            <person name="Kamihara K."/>
            <person name="Katsuta N."/>
            <person name="Sato K."/>
            <person name="Tanikawa M."/>
            <person name="Yamazaki M."/>
            <person name="Ninomiya K."/>
            <person name="Ishibashi T."/>
            <person name="Yamashita H."/>
            <person name="Murakawa K."/>
            <person name="Fujimori K."/>
            <person name="Tanai H."/>
            <person name="Kimata M."/>
            <person name="Watanabe M."/>
            <person name="Hiraoka S."/>
            <person name="Chiba Y."/>
            <person name="Ishida S."/>
            <person name="Ono Y."/>
            <person name="Takiguchi S."/>
            <person name="Watanabe S."/>
            <person name="Yosida M."/>
            <person name="Hotuta T."/>
            <person name="Kusano J."/>
            <person name="Kanehori K."/>
            <person name="Takahashi-Fujii A."/>
            <person name="Hara H."/>
            <person name="Tanase T.-O."/>
            <person name="Nomura Y."/>
            <person name="Togiya S."/>
            <person name="Komai F."/>
            <person name="Hara R."/>
            <person name="Takeuchi K."/>
            <person name="Arita M."/>
            <person name="Imose N."/>
            <person name="Musashino K."/>
            <person name="Yuuki H."/>
            <person name="Oshima A."/>
            <person name="Sasaki N."/>
            <person name="Aotsuka S."/>
            <person name="Yoshikawa Y."/>
            <person name="Matsunawa H."/>
            <person name="Ichihara T."/>
            <person name="Shiohata N."/>
            <person name="Sano S."/>
            <person name="Moriya S."/>
            <person name="Momiyama H."/>
            <person name="Satoh N."/>
            <person name="Takami S."/>
            <person name="Terashima Y."/>
            <person name="Suzuki O."/>
            <person name="Nakagawa S."/>
            <person name="Senoh A."/>
            <person name="Mizoguchi H."/>
            <person name="Goto Y."/>
            <person name="Shimizu F."/>
            <person name="Wakebe H."/>
            <person name="Hishigaki H."/>
            <person name="Watanabe T."/>
            <person name="Sugiyama A."/>
            <person name="Takemoto M."/>
            <person name="Kawakami B."/>
            <person name="Yamazaki M."/>
            <person name="Watanabe K."/>
            <person name="Kumagai A."/>
            <person name="Itakura S."/>
            <person name="Fukuzumi Y."/>
            <person name="Fujimori Y."/>
            <person name="Komiyama M."/>
            <person name="Tashiro H."/>
            <person name="Tanigami A."/>
            <person name="Fujiwara T."/>
            <person name="Ono T."/>
            <person name="Yamada K."/>
            <person name="Fujii Y."/>
            <person name="Ozaki K."/>
            <person name="Hirao M."/>
            <person name="Ohmori Y."/>
            <person name="Kawabata A."/>
            <person name="Hikiji T."/>
            <person name="Kobatake N."/>
            <person name="Inagaki H."/>
            <person name="Ikema Y."/>
            <person name="Okamoto S."/>
            <person name="Okitani R."/>
            <person name="Kawakami T."/>
            <person name="Noguchi S."/>
            <person name="Itoh T."/>
            <person name="Shigeta K."/>
            <person name="Senba T."/>
            <person name="Matsumura K."/>
            <person name="Nakajima Y."/>
            <person name="Mizuno T."/>
            <person name="Morinaga M."/>
            <person name="Sasaki M."/>
            <person name="Togashi T."/>
            <person name="Oyama M."/>
            <person name="Hata H."/>
            <person name="Watanabe M."/>
            <person name="Komatsu T."/>
            <person name="Mizushima-Sugano J."/>
            <person name="Satoh T."/>
            <person name="Shirai Y."/>
            <person name="Takahashi Y."/>
            <person name="Nakagawa K."/>
            <person name="Okumura K."/>
            <person name="Nagase T."/>
            <person name="Nomura N."/>
            <person name="Kikuchi H."/>
            <person name="Masuho Y."/>
            <person name="Yamashita R."/>
            <person name="Nakai K."/>
            <person name="Yada T."/>
            <person name="Nakamura Y."/>
            <person name="Ohara O."/>
            <person name="Isogai T."/>
            <person name="Sugano S."/>
        </authorList>
    </citation>
    <scope>NUCLEOTIDE SEQUENCE [LARGE SCALE MRNA]</scope>
    <source>
        <tissue>Tongue</tissue>
    </source>
</reference>
<reference key="2">
    <citation type="journal article" date="2007" name="BMC Genomics">
        <title>The full-ORF clone resource of the German cDNA consortium.</title>
        <authorList>
            <person name="Bechtel S."/>
            <person name="Rosenfelder H."/>
            <person name="Duda A."/>
            <person name="Schmidt C.P."/>
            <person name="Ernst U."/>
            <person name="Wellenreuther R."/>
            <person name="Mehrle A."/>
            <person name="Schuster C."/>
            <person name="Bahr A."/>
            <person name="Bloecker H."/>
            <person name="Heubner D."/>
            <person name="Hoerlein A."/>
            <person name="Michel G."/>
            <person name="Wedler H."/>
            <person name="Koehrer K."/>
            <person name="Ottenwaelder B."/>
            <person name="Poustka A."/>
            <person name="Wiemann S."/>
            <person name="Schupp I."/>
        </authorList>
    </citation>
    <scope>NUCLEOTIDE SEQUENCE [LARGE SCALE MRNA]</scope>
    <source>
        <tissue>Kidney</tissue>
    </source>
</reference>
<reference key="3">
    <citation type="journal article" date="2003" name="Nature">
        <title>The DNA sequence and analysis of human chromosome 14.</title>
        <authorList>
            <person name="Heilig R."/>
            <person name="Eckenberg R."/>
            <person name="Petit J.-L."/>
            <person name="Fonknechten N."/>
            <person name="Da Silva C."/>
            <person name="Cattolico L."/>
            <person name="Levy M."/>
            <person name="Barbe V."/>
            <person name="De Berardinis V."/>
            <person name="Ureta-Vidal A."/>
            <person name="Pelletier E."/>
            <person name="Vico V."/>
            <person name="Anthouard V."/>
            <person name="Rowen L."/>
            <person name="Madan A."/>
            <person name="Qin S."/>
            <person name="Sun H."/>
            <person name="Du H."/>
            <person name="Pepin K."/>
            <person name="Artiguenave F."/>
            <person name="Robert C."/>
            <person name="Cruaud C."/>
            <person name="Bruels T."/>
            <person name="Jaillon O."/>
            <person name="Friedlander L."/>
            <person name="Samson G."/>
            <person name="Brottier P."/>
            <person name="Cure S."/>
            <person name="Segurens B."/>
            <person name="Aniere F."/>
            <person name="Samain S."/>
            <person name="Crespeau H."/>
            <person name="Abbasi N."/>
            <person name="Aiach N."/>
            <person name="Boscus D."/>
            <person name="Dickhoff R."/>
            <person name="Dors M."/>
            <person name="Dubois I."/>
            <person name="Friedman C."/>
            <person name="Gouyvenoux M."/>
            <person name="James R."/>
            <person name="Madan A."/>
            <person name="Mairey-Estrada B."/>
            <person name="Mangenot S."/>
            <person name="Martins N."/>
            <person name="Menard M."/>
            <person name="Oztas S."/>
            <person name="Ratcliffe A."/>
            <person name="Shaffer T."/>
            <person name="Trask B."/>
            <person name="Vacherie B."/>
            <person name="Bellemere C."/>
            <person name="Belser C."/>
            <person name="Besnard-Gonnet M."/>
            <person name="Bartol-Mavel D."/>
            <person name="Boutard M."/>
            <person name="Briez-Silla S."/>
            <person name="Combette S."/>
            <person name="Dufosse-Laurent V."/>
            <person name="Ferron C."/>
            <person name="Lechaplais C."/>
            <person name="Louesse C."/>
            <person name="Muselet D."/>
            <person name="Magdelenat G."/>
            <person name="Pateau E."/>
            <person name="Petit E."/>
            <person name="Sirvain-Trukniewicz P."/>
            <person name="Trybou A."/>
            <person name="Vega-Czarny N."/>
            <person name="Bataille E."/>
            <person name="Bluet E."/>
            <person name="Bordelais I."/>
            <person name="Dubois M."/>
            <person name="Dumont C."/>
            <person name="Guerin T."/>
            <person name="Haffray S."/>
            <person name="Hammadi R."/>
            <person name="Muanga J."/>
            <person name="Pellouin V."/>
            <person name="Robert D."/>
            <person name="Wunderle E."/>
            <person name="Gauguet G."/>
            <person name="Roy A."/>
            <person name="Sainte-Marthe L."/>
            <person name="Verdier J."/>
            <person name="Verdier-Discala C."/>
            <person name="Hillier L.W."/>
            <person name="Fulton L."/>
            <person name="McPherson J."/>
            <person name="Matsuda F."/>
            <person name="Wilson R."/>
            <person name="Scarpelli C."/>
            <person name="Gyapay G."/>
            <person name="Wincker P."/>
            <person name="Saurin W."/>
            <person name="Quetier F."/>
            <person name="Waterston R."/>
            <person name="Hood L."/>
            <person name="Weissenbach J."/>
        </authorList>
    </citation>
    <scope>NUCLEOTIDE SEQUENCE [LARGE SCALE GENOMIC DNA]</scope>
</reference>
<reference key="4">
    <citation type="submission" date="2005-07" db="EMBL/GenBank/DDBJ databases">
        <authorList>
            <person name="Mural R.J."/>
            <person name="Istrail S."/>
            <person name="Sutton G.G."/>
            <person name="Florea L."/>
            <person name="Halpern A.L."/>
            <person name="Mobarry C.M."/>
            <person name="Lippert R."/>
            <person name="Walenz B."/>
            <person name="Shatkay H."/>
            <person name="Dew I."/>
            <person name="Miller J.R."/>
            <person name="Flanigan M.J."/>
            <person name="Edwards N.J."/>
            <person name="Bolanos R."/>
            <person name="Fasulo D."/>
            <person name="Halldorsson B.V."/>
            <person name="Hannenhalli S."/>
            <person name="Turner R."/>
            <person name="Yooseph S."/>
            <person name="Lu F."/>
            <person name="Nusskern D.R."/>
            <person name="Shue B.C."/>
            <person name="Zheng X.H."/>
            <person name="Zhong F."/>
            <person name="Delcher A.L."/>
            <person name="Huson D.H."/>
            <person name="Kravitz S.A."/>
            <person name="Mouchard L."/>
            <person name="Reinert K."/>
            <person name="Remington K.A."/>
            <person name="Clark A.G."/>
            <person name="Waterman M.S."/>
            <person name="Eichler E.E."/>
            <person name="Adams M.D."/>
            <person name="Hunkapiller M.W."/>
            <person name="Myers E.W."/>
            <person name="Venter J.C."/>
        </authorList>
    </citation>
    <scope>NUCLEOTIDE SEQUENCE [LARGE SCALE GENOMIC DNA]</scope>
</reference>
<reference key="5">
    <citation type="journal article" date="2004" name="Genome Res.">
        <title>The status, quality, and expansion of the NIH full-length cDNA project: the Mammalian Gene Collection (MGC).</title>
        <authorList>
            <consortium name="The MGC Project Team"/>
        </authorList>
    </citation>
    <scope>NUCLEOTIDE SEQUENCE [LARGE SCALE MRNA]</scope>
    <source>
        <tissue>Eye</tissue>
    </source>
</reference>
<reference key="6">
    <citation type="submission" date="2006-05" db="UniProtKB">
        <authorList>
            <person name="Bienvenut W.V."/>
            <person name="Kanor S."/>
            <person name="Tissot J.-D."/>
            <person name="Quadroni M."/>
        </authorList>
    </citation>
    <scope>PROTEIN SEQUENCE OF 2-17</scope>
    <scope>CLEAVAGE OF INITIATOR METHIONINE</scope>
    <scope>ACETYLATION AT SER-2</scope>
    <scope>IDENTIFICATION BY MASS SPECTROMETRY</scope>
    <source>
        <tissue>T-cell</tissue>
    </source>
</reference>
<reference key="7">
    <citation type="journal article" date="2006" name="Cell">
        <title>Global, in vivo, and site-specific phosphorylation dynamics in signaling networks.</title>
        <authorList>
            <person name="Olsen J.V."/>
            <person name="Blagoev B."/>
            <person name="Gnad F."/>
            <person name="Macek B."/>
            <person name="Kumar C."/>
            <person name="Mortensen P."/>
            <person name="Mann M."/>
        </authorList>
    </citation>
    <scope>PHOSPHORYLATION [LARGE SCALE ANALYSIS] AT SER-15</scope>
    <scope>IDENTIFICATION BY MASS SPECTROMETRY [LARGE SCALE ANALYSIS]</scope>
    <source>
        <tissue>Cervix carcinoma</tissue>
    </source>
</reference>
<reference key="8">
    <citation type="journal article" date="2008" name="Mol. Cell">
        <title>Kinase-selective enrichment enables quantitative phosphoproteomics of the kinome across the cell cycle.</title>
        <authorList>
            <person name="Daub H."/>
            <person name="Olsen J.V."/>
            <person name="Bairlein M."/>
            <person name="Gnad F."/>
            <person name="Oppermann F.S."/>
            <person name="Korner R."/>
            <person name="Greff Z."/>
            <person name="Keri G."/>
            <person name="Stemmann O."/>
            <person name="Mann M."/>
        </authorList>
    </citation>
    <scope>PHOSPHORYLATION [LARGE SCALE ANALYSIS] AT SER-15</scope>
    <scope>IDENTIFICATION BY MASS SPECTROMETRY [LARGE SCALE ANALYSIS]</scope>
    <source>
        <tissue>Cervix carcinoma</tissue>
    </source>
</reference>
<reference key="9">
    <citation type="journal article" date="2009" name="Anal. Chem.">
        <title>Lys-N and trypsin cover complementary parts of the phosphoproteome in a refined SCX-based approach.</title>
        <authorList>
            <person name="Gauci S."/>
            <person name="Helbig A.O."/>
            <person name="Slijper M."/>
            <person name="Krijgsveld J."/>
            <person name="Heck A.J."/>
            <person name="Mohammed S."/>
        </authorList>
    </citation>
    <scope>ACETYLATION [LARGE SCALE ANALYSIS] AT SER-2</scope>
    <scope>CLEAVAGE OF INITIATOR METHIONINE [LARGE SCALE ANALYSIS]</scope>
    <scope>IDENTIFICATION BY MASS SPECTROMETRY [LARGE SCALE ANALYSIS]</scope>
</reference>
<reference key="10">
    <citation type="journal article" date="2010" name="Sci. Signal.">
        <title>Quantitative phosphoproteomics reveals widespread full phosphorylation site occupancy during mitosis.</title>
        <authorList>
            <person name="Olsen J.V."/>
            <person name="Vermeulen M."/>
            <person name="Santamaria A."/>
            <person name="Kumar C."/>
            <person name="Miller M.L."/>
            <person name="Jensen L.J."/>
            <person name="Gnad F."/>
            <person name="Cox J."/>
            <person name="Jensen T.S."/>
            <person name="Nigg E.A."/>
            <person name="Brunak S."/>
            <person name="Mann M."/>
        </authorList>
    </citation>
    <scope>ACETYLATION [LARGE SCALE ANALYSIS] AT SER-2</scope>
    <scope>PHOSPHORYLATION [LARGE SCALE ANALYSIS] AT SER-15</scope>
    <scope>CLEAVAGE OF INITIATOR METHIONINE [LARGE SCALE ANALYSIS]</scope>
    <scope>IDENTIFICATION BY MASS SPECTROMETRY [LARGE SCALE ANALYSIS]</scope>
    <source>
        <tissue>Cervix carcinoma</tissue>
    </source>
</reference>
<reference key="11">
    <citation type="journal article" date="2011" name="Sci. Signal.">
        <title>System-wide temporal characterization of the proteome and phosphoproteome of human embryonic stem cell differentiation.</title>
        <authorList>
            <person name="Rigbolt K.T."/>
            <person name="Prokhorova T.A."/>
            <person name="Akimov V."/>
            <person name="Henningsen J."/>
            <person name="Johansen P.T."/>
            <person name="Kratchmarova I."/>
            <person name="Kassem M."/>
            <person name="Mann M."/>
            <person name="Olsen J.V."/>
            <person name="Blagoev B."/>
        </authorList>
    </citation>
    <scope>ACETYLATION [LARGE SCALE ANALYSIS] AT SER-2</scope>
    <scope>PHOSPHORYLATION [LARGE SCALE ANALYSIS] AT SER-15</scope>
    <scope>CLEAVAGE OF INITIATOR METHIONINE [LARGE SCALE ANALYSIS]</scope>
    <scope>IDENTIFICATION BY MASS SPECTROMETRY [LARGE SCALE ANALYSIS]</scope>
</reference>
<reference key="12">
    <citation type="journal article" date="2013" name="J. Proteome Res.">
        <title>Toward a comprehensive characterization of a human cancer cell phosphoproteome.</title>
        <authorList>
            <person name="Zhou H."/>
            <person name="Di Palma S."/>
            <person name="Preisinger C."/>
            <person name="Peng M."/>
            <person name="Polat A.N."/>
            <person name="Heck A.J."/>
            <person name="Mohammed S."/>
        </authorList>
    </citation>
    <scope>PHOSPHORYLATION [LARGE SCALE ANALYSIS] AT SER-2; SER-6 AND SER-15</scope>
    <scope>IDENTIFICATION BY MASS SPECTROMETRY [LARGE SCALE ANALYSIS]</scope>
    <source>
        <tissue>Cervix carcinoma</tissue>
        <tissue>Erythroleukemia</tissue>
    </source>
</reference>
<organism>
    <name type="scientific">Homo sapiens</name>
    <name type="common">Human</name>
    <dbReference type="NCBI Taxonomy" id="9606"/>
    <lineage>
        <taxon>Eukaryota</taxon>
        <taxon>Metazoa</taxon>
        <taxon>Chordata</taxon>
        <taxon>Craniata</taxon>
        <taxon>Vertebrata</taxon>
        <taxon>Euteleostomi</taxon>
        <taxon>Mammalia</taxon>
        <taxon>Eutheria</taxon>
        <taxon>Euarchontoglires</taxon>
        <taxon>Primates</taxon>
        <taxon>Haplorrhini</taxon>
        <taxon>Catarrhini</taxon>
        <taxon>Hominidae</taxon>
        <taxon>Homo</taxon>
    </lineage>
</organism>
<proteinExistence type="evidence at protein level"/>
<protein>
    <recommendedName>
        <fullName>MAPK-interacting and spindle-stabilizing protein-like</fullName>
    </recommendedName>
    <alternativeName>
        <fullName>Mitogen-activated protein kinase 1-interacting protein 1-like</fullName>
    </alternativeName>
</protein>
<gene>
    <name type="primary">MAPK1IP1L</name>
    <name type="synonym">C14orf32</name>
</gene>
<feature type="initiator methionine" description="Removed" evidence="2 6 7 8">
    <location>
        <position position="1"/>
    </location>
</feature>
<feature type="chain" id="PRO_0000209890" description="MAPK-interacting and spindle-stabilizing protein-like">
    <location>
        <begin position="2"/>
        <end position="245"/>
    </location>
</feature>
<feature type="region of interest" description="Disordered" evidence="1">
    <location>
        <begin position="1"/>
        <end position="245"/>
    </location>
</feature>
<feature type="compositionally biased region" description="Polar residues" evidence="1">
    <location>
        <begin position="17"/>
        <end position="26"/>
    </location>
</feature>
<feature type="compositionally biased region" description="Low complexity" evidence="1">
    <location>
        <begin position="34"/>
        <end position="51"/>
    </location>
</feature>
<feature type="compositionally biased region" description="Pro residues" evidence="1">
    <location>
        <begin position="74"/>
        <end position="127"/>
    </location>
</feature>
<feature type="compositionally biased region" description="Pro residues" evidence="1">
    <location>
        <begin position="164"/>
        <end position="190"/>
    </location>
</feature>
<feature type="compositionally biased region" description="Pro residues" evidence="1">
    <location>
        <begin position="198"/>
        <end position="207"/>
    </location>
</feature>
<feature type="modified residue" description="N-acetylserine" evidence="2 6 7 8">
    <location>
        <position position="2"/>
    </location>
</feature>
<feature type="modified residue" description="Phosphoserine" evidence="9">
    <location>
        <position position="2"/>
    </location>
</feature>
<feature type="modified residue" description="Phosphoserine" evidence="9">
    <location>
        <position position="6"/>
    </location>
</feature>
<feature type="modified residue" description="Phosphoserine" evidence="4 5 7 8 9">
    <location>
        <position position="15"/>
    </location>
</feature>
<comment type="interaction">
    <interactant intactId="EBI-741424">
        <id>Q8NDC0</id>
    </interactant>
    <interactant intactId="EBI-1057448">
        <id>Q5VV41</id>
        <label>ARHGEF16</label>
    </interactant>
    <organismsDiffer>false</organismsDiffer>
    <experiments>3</experiments>
</comment>
<comment type="interaction">
    <interactant intactId="EBI-741424">
        <id>Q8NDC0</id>
    </interactant>
    <interactant intactId="EBI-946029">
        <id>Q6P1W5</id>
        <label>C1orf94</label>
    </interactant>
    <organismsDiffer>false</organismsDiffer>
    <experiments>5</experiments>
</comment>
<comment type="interaction">
    <interactant intactId="EBI-741424">
        <id>Q8NDC0</id>
    </interactant>
    <interactant intactId="EBI-747776">
        <id>Q53EZ4</id>
        <label>CEP55</label>
    </interactant>
    <organismsDiffer>false</organismsDiffer>
    <experiments>3</experiments>
</comment>
<comment type="interaction">
    <interactant intactId="EBI-741424">
        <id>Q8NDC0</id>
    </interactant>
    <interactant intactId="EBI-724310">
        <id>Q15038</id>
        <label>DAZAP2</label>
    </interactant>
    <organismsDiffer>false</organismsDiffer>
    <experiments>3</experiments>
</comment>
<comment type="interaction">
    <interactant intactId="EBI-741424">
        <id>Q8NDC0</id>
    </interactant>
    <interactant intactId="EBI-739737">
        <id>Q01844</id>
        <label>EWSR1</label>
    </interactant>
    <organismsDiffer>false</organismsDiffer>
    <experiments>5</experiments>
</comment>
<comment type="interaction">
    <interactant intactId="EBI-741424">
        <id>Q8NDC0</id>
    </interactant>
    <interactant intactId="EBI-12121668">
        <id>Q96AE4-2</id>
        <label>FUBP1</label>
    </interactant>
    <organismsDiffer>false</organismsDiffer>
    <experiments>3</experiments>
</comment>
<comment type="interaction">
    <interactant intactId="EBI-741424">
        <id>Q8NDC0</id>
    </interactant>
    <interactant intactId="EBI-16429135">
        <id>A0A0S2Z4Q4</id>
        <label>HGS</label>
    </interactant>
    <organismsDiffer>false</organismsDiffer>
    <experiments>3</experiments>
</comment>
<comment type="interaction">
    <interactant intactId="EBI-741424">
        <id>Q8NDC0</id>
    </interactant>
    <interactant intactId="EBI-740220">
        <id>O14964</id>
        <label>HGS</label>
    </interactant>
    <organismsDiffer>false</organismsDiffer>
    <experiments>6</experiments>
</comment>
<comment type="interaction">
    <interactant intactId="EBI-741424">
        <id>Q8NDC0</id>
    </interactant>
    <interactant intactId="EBI-1018153">
        <id>Q9BUJ2</id>
        <label>HNRNPUL1</label>
    </interactant>
    <organismsDiffer>false</organismsDiffer>
    <experiments>5</experiments>
</comment>
<comment type="interaction">
    <interactant intactId="EBI-741424">
        <id>Q8NDC0</id>
    </interactant>
    <interactant intactId="EBI-1048945">
        <id>Q3LI72</id>
        <label>KRTAP19-5</label>
    </interactant>
    <organismsDiffer>false</organismsDiffer>
    <experiments>3</experiments>
</comment>
<comment type="interaction">
    <interactant intactId="EBI-741424">
        <id>Q8NDC0</id>
    </interactant>
    <interactant intactId="EBI-10241353">
        <id>Q3SYF9</id>
        <label>KRTAP19-7</label>
    </interactant>
    <organismsDiffer>false</organismsDiffer>
    <experiments>3</experiments>
</comment>
<comment type="interaction">
    <interactant intactId="EBI-741424">
        <id>Q8NDC0</id>
    </interactant>
    <interactant intactId="EBI-12111050">
        <id>Q3LI64</id>
        <label>KRTAP6-1</label>
    </interactant>
    <organismsDiffer>false</organismsDiffer>
    <experiments>3</experiments>
</comment>
<comment type="interaction">
    <interactant intactId="EBI-741424">
        <id>Q8NDC0</id>
    </interactant>
    <interactant intactId="EBI-22311199">
        <id>Q3LI67</id>
        <label>KRTAP6-3</label>
    </interactant>
    <organismsDiffer>false</organismsDiffer>
    <experiments>3</experiments>
</comment>
<comment type="interaction">
    <interactant intactId="EBI-741424">
        <id>Q8NDC0</id>
    </interactant>
    <interactant intactId="EBI-739546">
        <id>Q96PV6</id>
        <label>LENG8</label>
    </interactant>
    <organismsDiffer>false</organismsDiffer>
    <experiments>5</experiments>
</comment>
<comment type="interaction">
    <interactant intactId="EBI-741424">
        <id>Q8NDC0</id>
    </interactant>
    <interactant intactId="EBI-716006">
        <id>Q9Y5V3</id>
        <label>MAGED1</label>
    </interactant>
    <organismsDiffer>false</organismsDiffer>
    <experiments>3</experiments>
</comment>
<comment type="interaction">
    <interactant intactId="EBI-741424">
        <id>Q8NDC0</id>
    </interactant>
    <interactant intactId="EBI-6447480">
        <id>P35548</id>
        <label>MSX2</label>
    </interactant>
    <organismsDiffer>false</organismsDiffer>
    <experiments>3</experiments>
</comment>
<comment type="interaction">
    <interactant intactId="EBI-741424">
        <id>Q8NDC0</id>
    </interactant>
    <interactant intactId="EBI-744023">
        <id>Q9BTL3</id>
        <label>RAMAC</label>
    </interactant>
    <organismsDiffer>false</organismsDiffer>
    <experiments>3</experiments>
</comment>
<comment type="interaction">
    <interactant intactId="EBI-741424">
        <id>Q8NDC0</id>
    </interactant>
    <interactant intactId="EBI-746056">
        <id>O43251</id>
        <label>RBFOX2</label>
    </interactant>
    <organismsDiffer>false</organismsDiffer>
    <experiments>3</experiments>
</comment>
<comment type="interaction">
    <interactant intactId="EBI-741424">
        <id>Q8NDC0</id>
    </interactant>
    <interactant intactId="EBI-744674">
        <id>O75177</id>
        <label>SS18L1</label>
    </interactant>
    <organismsDiffer>false</organismsDiffer>
    <experiments>3</experiments>
</comment>
<comment type="interaction">
    <interactant intactId="EBI-741424">
        <id>Q8NDC0</id>
    </interactant>
    <interactant intactId="EBI-12035119">
        <id>O75177-5</id>
        <label>SS18L1</label>
    </interactant>
    <organismsDiffer>false</organismsDiffer>
    <experiments>3</experiments>
</comment>
<comment type="interaction">
    <interactant intactId="EBI-741424">
        <id>Q8NDC0</id>
    </interactant>
    <interactant intactId="EBI-80140">
        <id>P63165</id>
        <label>SUMO1</label>
    </interactant>
    <organismsDiffer>false</organismsDiffer>
    <experiments>3</experiments>
</comment>
<comment type="interaction">
    <interactant intactId="EBI-741424">
        <id>Q8NDC0</id>
    </interactant>
    <interactant intactId="EBI-10175576">
        <id>G2XKQ0</id>
        <label>SUMO1P1</label>
    </interactant>
    <organismsDiffer>false</organismsDiffer>
    <experiments>3</experiments>
</comment>
<comment type="interaction">
    <interactant intactId="EBI-741424">
        <id>Q8NDC0</id>
    </interactant>
    <interactant intactId="EBI-357061">
        <id>Q92734</id>
        <label>TFG</label>
    </interactant>
    <organismsDiffer>false</organismsDiffer>
    <experiments>6</experiments>
</comment>
<comment type="interaction">
    <interactant intactId="EBI-741424">
        <id>Q8NDC0</id>
    </interactant>
    <interactant intactId="EBI-11064654">
        <id>Q01085-2</id>
        <label>TIAL1</label>
    </interactant>
    <organismsDiffer>false</organismsDiffer>
    <experiments>3</experiments>
</comment>
<comment type="interaction">
    <interactant intactId="EBI-741424">
        <id>Q8NDC0</id>
    </interactant>
    <interactant intactId="EBI-10180829">
        <id>Q7KZS0</id>
        <label>UBE2I</label>
    </interactant>
    <organismsDiffer>false</organismsDiffer>
    <experiments>6</experiments>
</comment>
<comment type="interaction">
    <interactant intactId="EBI-741424">
        <id>Q8NDC0</id>
    </interactant>
    <interactant intactId="EBI-2559305">
        <id>A5D8V6</id>
        <label>VPS37C</label>
    </interactant>
    <organismsDiffer>false</organismsDiffer>
    <experiments>6</experiments>
</comment>
<comment type="similarity">
    <text evidence="3">Belongs to the MISS family.</text>
</comment>
<name>MISSL_HUMAN</name>
<sequence length="245" mass="24269">MSDEFSLADALPEHSPAKTSAVSNTKPGQPPQGWPGSNPWNNPSAPSSVPSGLPPSATPSTVPFGPAPTGMYPSVPPTGPPPGPPAPFPPSGPSCPPPGGPYPAPTVPGPGPTGPYPTPNMPFPELPRPYGAPTDPAAAGPLGPWGSMSSGPWAPGMGGQYPTPNMPYPSPGPYPAPPPPQAPGAAPPVPWGTVPPGAWGPPAPYPAPTGSYPTPGLYPTPSNPFQVPSGPSGAPPMPGGPHSYH</sequence>
<evidence type="ECO:0000256" key="1">
    <source>
        <dbReference type="SAM" id="MobiDB-lite"/>
    </source>
</evidence>
<evidence type="ECO:0000269" key="2">
    <source ref="6"/>
</evidence>
<evidence type="ECO:0000305" key="3"/>
<evidence type="ECO:0007744" key="4">
    <source>
    </source>
</evidence>
<evidence type="ECO:0007744" key="5">
    <source>
    </source>
</evidence>
<evidence type="ECO:0007744" key="6">
    <source>
    </source>
</evidence>
<evidence type="ECO:0007744" key="7">
    <source>
    </source>
</evidence>
<evidence type="ECO:0007744" key="8">
    <source>
    </source>
</evidence>
<evidence type="ECO:0007744" key="9">
    <source>
    </source>
</evidence>
<accession>Q8NDC0</accession>
<accession>B2RDD8</accession>
<accession>Q96BG5</accession>
<keyword id="KW-0007">Acetylation</keyword>
<keyword id="KW-0903">Direct protein sequencing</keyword>
<keyword id="KW-0597">Phosphoprotein</keyword>
<keyword id="KW-1267">Proteomics identification</keyword>
<keyword id="KW-1185">Reference proteome</keyword>